<gene>
    <name evidence="1" type="primary">rraA</name>
    <name type="synonym">menG</name>
    <name type="ordered locus">c4881</name>
</gene>
<accession>P0A8R1</accession>
<accession>P32165</accession>
<reference key="1">
    <citation type="journal article" date="2002" name="Proc. Natl. Acad. Sci. U.S.A.">
        <title>Extensive mosaic structure revealed by the complete genome sequence of uropathogenic Escherichia coli.</title>
        <authorList>
            <person name="Welch R.A."/>
            <person name="Burland V."/>
            <person name="Plunkett G. III"/>
            <person name="Redford P."/>
            <person name="Roesch P."/>
            <person name="Rasko D."/>
            <person name="Buckles E.L."/>
            <person name="Liou S.-R."/>
            <person name="Boutin A."/>
            <person name="Hackett J."/>
            <person name="Stroud D."/>
            <person name="Mayhew G.F."/>
            <person name="Rose D.J."/>
            <person name="Zhou S."/>
            <person name="Schwartz D.C."/>
            <person name="Perna N.T."/>
            <person name="Mobley H.L.T."/>
            <person name="Donnenberg M.S."/>
            <person name="Blattner F.R."/>
        </authorList>
    </citation>
    <scope>NUCLEOTIDE SEQUENCE [LARGE SCALE GENOMIC DNA]</scope>
    <source>
        <strain>CFT073 / ATCC 700928 / UPEC</strain>
    </source>
</reference>
<sequence length="161" mass="17360">MKYDTSELCDIYQEDVNVVEPLFSNFGGRASFGGQIITVKCFEDNGLLYDLLEQNGRGRVLVVDGGGSVRRALVDAELARLAVQNEWEGLVIYGAVRQVDDLEELDIGIQAMAAIPVGAAGEGIGESDVRVNFGGVTFFSGDHLYADNTGIILSEDPLDIE</sequence>
<feature type="chain" id="PRO_0000209612" description="Regulator of ribonuclease activity A">
    <location>
        <begin position="1"/>
        <end position="161"/>
    </location>
</feature>
<name>RRAA_ECOL6</name>
<comment type="function">
    <text evidence="1">Globally modulates RNA abundance by binding to RNase E (Rne) and regulating its endonucleolytic activity. Can modulate Rne action in a substrate-dependent manner by altering the composition of the degradosome. Modulates RNA-binding and helicase activities of the degradosome.</text>
</comment>
<comment type="subunit">
    <text evidence="1">Homotrimer. Binds to both RNA-binding sites in the C-terminal region of Rne and to RhlB.</text>
</comment>
<comment type="subcellular location">
    <subcellularLocation>
        <location evidence="1">Cytoplasm</location>
    </subcellularLocation>
</comment>
<comment type="similarity">
    <text evidence="1">Belongs to the RraA family.</text>
</comment>
<evidence type="ECO:0000255" key="1">
    <source>
        <dbReference type="HAMAP-Rule" id="MF_00471"/>
    </source>
</evidence>
<organism>
    <name type="scientific">Escherichia coli O6:H1 (strain CFT073 / ATCC 700928 / UPEC)</name>
    <dbReference type="NCBI Taxonomy" id="199310"/>
    <lineage>
        <taxon>Bacteria</taxon>
        <taxon>Pseudomonadati</taxon>
        <taxon>Pseudomonadota</taxon>
        <taxon>Gammaproteobacteria</taxon>
        <taxon>Enterobacterales</taxon>
        <taxon>Enterobacteriaceae</taxon>
        <taxon>Escherichia</taxon>
    </lineage>
</organism>
<protein>
    <recommendedName>
        <fullName evidence="1">Regulator of ribonuclease activity A</fullName>
    </recommendedName>
</protein>
<keyword id="KW-0963">Cytoplasm</keyword>
<keyword id="KW-1185">Reference proteome</keyword>
<proteinExistence type="inferred from homology"/>
<dbReference type="EMBL" id="AE014075">
    <property type="protein sequence ID" value="AAN83309.1"/>
    <property type="molecule type" value="Genomic_DNA"/>
</dbReference>
<dbReference type="RefSeq" id="WP_000872908.1">
    <property type="nucleotide sequence ID" value="NZ_CP051263.1"/>
</dbReference>
<dbReference type="SMR" id="P0A8R1"/>
<dbReference type="STRING" id="199310.c4881"/>
<dbReference type="GeneID" id="93777969"/>
<dbReference type="KEGG" id="ecc:c4881"/>
<dbReference type="eggNOG" id="COG0684">
    <property type="taxonomic scope" value="Bacteria"/>
</dbReference>
<dbReference type="HOGENOM" id="CLU_072626_4_0_6"/>
<dbReference type="BioCyc" id="ECOL199310:C4881-MONOMER"/>
<dbReference type="Proteomes" id="UP000001410">
    <property type="component" value="Chromosome"/>
</dbReference>
<dbReference type="GO" id="GO:0005829">
    <property type="term" value="C:cytosol"/>
    <property type="evidence" value="ECO:0007669"/>
    <property type="project" value="TreeGrafter"/>
</dbReference>
<dbReference type="GO" id="GO:0060698">
    <property type="term" value="F:endoribonuclease inhibitor activity"/>
    <property type="evidence" value="ECO:0007669"/>
    <property type="project" value="UniProtKB-UniRule"/>
</dbReference>
<dbReference type="GO" id="GO:0019899">
    <property type="term" value="F:enzyme binding"/>
    <property type="evidence" value="ECO:0007669"/>
    <property type="project" value="UniProtKB-UniRule"/>
</dbReference>
<dbReference type="GO" id="GO:1902369">
    <property type="term" value="P:negative regulation of RNA catabolic process"/>
    <property type="evidence" value="ECO:0007669"/>
    <property type="project" value="TreeGrafter"/>
</dbReference>
<dbReference type="CDD" id="cd16841">
    <property type="entry name" value="RraA_family"/>
    <property type="match status" value="1"/>
</dbReference>
<dbReference type="FunFam" id="3.50.30.40:FF:000001">
    <property type="entry name" value="Regulator of ribonuclease activity A"/>
    <property type="match status" value="1"/>
</dbReference>
<dbReference type="Gene3D" id="3.50.30.40">
    <property type="entry name" value="Ribonuclease E inhibitor RraA/RraA-like"/>
    <property type="match status" value="1"/>
</dbReference>
<dbReference type="HAMAP" id="MF_00471">
    <property type="entry name" value="RraA"/>
    <property type="match status" value="1"/>
</dbReference>
<dbReference type="InterPro" id="IPR010203">
    <property type="entry name" value="RraA"/>
</dbReference>
<dbReference type="InterPro" id="IPR005493">
    <property type="entry name" value="RraA/RraA-like"/>
</dbReference>
<dbReference type="InterPro" id="IPR036704">
    <property type="entry name" value="RraA/RraA-like_sf"/>
</dbReference>
<dbReference type="InterPro" id="IPR014339">
    <property type="entry name" value="RraA_gpbac"/>
</dbReference>
<dbReference type="NCBIfam" id="TIGR01935">
    <property type="entry name" value="NOT-MenG"/>
    <property type="match status" value="1"/>
</dbReference>
<dbReference type="NCBIfam" id="NF006875">
    <property type="entry name" value="PRK09372.1"/>
    <property type="match status" value="1"/>
</dbReference>
<dbReference type="NCBIfam" id="TIGR02998">
    <property type="entry name" value="RraA_entero"/>
    <property type="match status" value="1"/>
</dbReference>
<dbReference type="PANTHER" id="PTHR33254">
    <property type="entry name" value="4-HYDROXY-4-METHYL-2-OXOGLUTARATE ALDOLASE 3-RELATED"/>
    <property type="match status" value="1"/>
</dbReference>
<dbReference type="PANTHER" id="PTHR33254:SF29">
    <property type="entry name" value="REGULATOR OF RIBONUCLEASE ACTIVITY A"/>
    <property type="match status" value="1"/>
</dbReference>
<dbReference type="Pfam" id="PF03737">
    <property type="entry name" value="RraA-like"/>
    <property type="match status" value="1"/>
</dbReference>
<dbReference type="SUPFAM" id="SSF89562">
    <property type="entry name" value="RraA-like"/>
    <property type="match status" value="1"/>
</dbReference>